<gene>
    <name evidence="4" type="primary">ptaJ</name>
    <name type="ORF">PFICI_10835</name>
</gene>
<evidence type="ECO:0000250" key="1">
    <source>
        <dbReference type="UniProtKB" id="Q0CCX5"/>
    </source>
</evidence>
<evidence type="ECO:0000269" key="2">
    <source>
    </source>
</evidence>
<evidence type="ECO:0000269" key="3">
    <source>
    </source>
</evidence>
<evidence type="ECO:0000303" key="4">
    <source>
    </source>
</evidence>
<evidence type="ECO:0000305" key="5"/>
<evidence type="ECO:0000305" key="6">
    <source>
    </source>
</evidence>
<keyword id="KW-0560">Oxidoreductase</keyword>
<keyword id="KW-1185">Reference proteome</keyword>
<reference key="1">
    <citation type="journal article" date="2014" name="ChemBioChem">
        <title>Identification of the first diphenyl ether gene cluster for pestheic acid biosynthesis in plant endophyte Pestalotiopsis fici.</title>
        <authorList>
            <person name="Xu X."/>
            <person name="Liu L."/>
            <person name="Zhang F."/>
            <person name="Wang W."/>
            <person name="Li J."/>
            <person name="Guo L."/>
            <person name="Che Y."/>
            <person name="Liu G."/>
        </authorList>
    </citation>
    <scope>NUCLEOTIDE SEQUENCE [GENOMIC DNA]</scope>
    <scope>FUNCTION</scope>
    <scope>INDUCTION</scope>
    <source>
        <strain>W106-1 / CGMCC3.15140</strain>
    </source>
</reference>
<reference key="2">
    <citation type="journal article" date="2015" name="BMC Genomics">
        <title>Genomic and transcriptomic analysis of the endophytic fungus Pestalotiopsis fici reveals its lifestyle and high potential for synthesis of natural products.</title>
        <authorList>
            <person name="Wang X."/>
            <person name="Zhang X."/>
            <person name="Liu L."/>
            <person name="Xiang M."/>
            <person name="Wang W."/>
            <person name="Sun X."/>
            <person name="Che Y."/>
            <person name="Guo L."/>
            <person name="Liu G."/>
            <person name="Guo L."/>
            <person name="Wang C."/>
            <person name="Yin W.B."/>
            <person name="Stadler M."/>
            <person name="Zhang X."/>
            <person name="Liu X."/>
        </authorList>
    </citation>
    <scope>NUCLEOTIDE SEQUENCE [LARGE SCALE GENOMIC DNA]</scope>
    <scope>INDUCTION</scope>
    <source>
        <strain>W106-1 / CGMCC3.15140</strain>
    </source>
</reference>
<comment type="function">
    <text evidence="2">Baeyer-Villiger oxidase; part of the gene cluster that mediates the biosynthesis of pestheic acid, a diphenyl ether which is a biosynthetic precursor of the unique chloropupukeananes (PubMed:24302702). The biosynthesis initiates from condensation of acetate and malonate units catalyzed by the non-reducing PKS ptaA (PubMed:24302702). As the ptaA protein is TE/CLC domain-deficient, hydrolysis and Claisen cyclization of the polyketide could be catalyzed by ptaB containing a beta-lactamase domain (PubMed:24302702). The ptaB protein might hydrolyze the thioester bond between the ACP of ptaA and the intermediate to release atrochrysone carboxylic acid, which is spontaneously dehydrated to form endocrocin anthrone (PubMed:24302702). Endocrocin anthrone is then converted to endocrocin, catalyzed by the anthrone oxygenase ptaC (PubMed:24302702). Spontaneous decarboxylation of endocrocin occurs to generate emodin (PubMed:24302702). An O-methyltransferase (ptaH or ptaI) could methylate emodin to form physcion (PubMed:24302702). PtaJ could then catalyze the oxidative cleavage of physcion, and rotation of the intermediate could then afford desmethylisosulochrin (PubMed:24302702). PtaF, a putative NADH-dependent oxidoreductase, might also participate in the oxidative cleavage step (PubMed:24302702). Desmethylisosulochrin is then transformed by another O-methyltransferase (ptaH or ptaI) to form isosulochrin (PubMed:24302702). Chlorination of isosulochrin by ptaM in the cyclohexadienone B ring then produces chloroisosulochrin (PubMed:24302702). PtaE is responsible for the oxidative coupling reactions of both benzophenones isosulouchrin and chloroisosulouchrin to RES-1214-1 and pestheic acid respectively, regardless of chlorination.</text>
</comment>
<comment type="cofactor">
    <cofactor evidence="1">
        <name>NADPH</name>
        <dbReference type="ChEBI" id="CHEBI:57783"/>
    </cofactor>
</comment>
<comment type="pathway">
    <text evidence="6">Secondary metabolite biosynthesis.</text>
</comment>
<comment type="induction">
    <text evidence="3 6">The cluster is expressed in rice fermentation medium (PubMed:25623211). Three regulators are located in the cluster (ptaR1, ptaR2 and ptaR3), suggesting that the production of pestheic acid is controlled by a complex regulatory mechanism (PubMed:24302702).</text>
</comment>
<comment type="similarity">
    <text evidence="5">Belongs to the questin oxidase family.</text>
</comment>
<proteinExistence type="evidence at transcript level"/>
<protein>
    <recommendedName>
        <fullName evidence="4">Baeyer-Villiger oxidase ptaJ</fullName>
        <ecNumber evidence="6">1.-.-.-</ecNumber>
    </recommendedName>
    <alternativeName>
        <fullName evidence="4">Pestheic acid biosynthesis cluster protein J</fullName>
    </alternativeName>
</protein>
<sequence>MAASTAAQVQLSEEALGLARIFENPKGSLEAASKLLQKNHDEFHVFWRDVGGHNHIPHSVLSILALGGGPAELQRAWDDGVAIQRPTPPLDEDVVKKLENPAEFRARIGSIPNYTNFLHFFRNQMDKKGWQAVVSEYAFSRTPLAETIFAQLFEGAYHPFIHIGFGIEFNLPSIIAEGLAQAATHDSAGIEGFFLEAERQAAQSKGPGKSLVQLLDEVRTTEKIKTAARLPDGPVRVRDGVIGRAGAEIAALASQFRVPADQLSRGAAESINISAYTAGAAQRAGKARKIDFFHMHNTTSSLFLTVFLNQPWISTEDKVRIVEWKGRLDLVWYAACSAPDLNVDHVIGYKPAQSAGWGWKELYEAINVAHDDGHLAKIVRALKNGEEVSRPFESGEGAEAFPIKGDSWLKLAQMSYDTTLDLPDDDKWIWGAGFLPLWNKVPSL</sequence>
<name>PTAJ_PESFW</name>
<accession>A0A067XMK8</accession>
<accession>W3WVT2</accession>
<feature type="chain" id="PRO_0000443049" description="Baeyer-Villiger oxidase ptaJ">
    <location>
        <begin position="1"/>
        <end position="444"/>
    </location>
</feature>
<dbReference type="EC" id="1.-.-.-" evidence="6"/>
<dbReference type="EMBL" id="KC145148">
    <property type="protein sequence ID" value="AGO59039.1"/>
    <property type="molecule type" value="Genomic_DNA"/>
</dbReference>
<dbReference type="EMBL" id="KI912116">
    <property type="protein sequence ID" value="ETS76961.1"/>
    <property type="molecule type" value="Genomic_DNA"/>
</dbReference>
<dbReference type="RefSeq" id="XP_007837607.1">
    <property type="nucleotide sequence ID" value="XM_007839416.1"/>
</dbReference>
<dbReference type="SMR" id="A0A067XMK8"/>
<dbReference type="GeneID" id="19275848"/>
<dbReference type="KEGG" id="pfy:PFICI_10835"/>
<dbReference type="eggNOG" id="ENOG502S69W">
    <property type="taxonomic scope" value="Eukaryota"/>
</dbReference>
<dbReference type="InParanoid" id="A0A067XMK8"/>
<dbReference type="OMA" id="WLKIARM"/>
<dbReference type="OrthoDB" id="10004862at2759"/>
<dbReference type="Proteomes" id="UP000030651">
    <property type="component" value="Unassembled WGS sequence"/>
</dbReference>
<dbReference type="GO" id="GO:0016491">
    <property type="term" value="F:oxidoreductase activity"/>
    <property type="evidence" value="ECO:0007669"/>
    <property type="project" value="UniProtKB-KW"/>
</dbReference>
<dbReference type="InterPro" id="IPR025337">
    <property type="entry name" value="Questin_oxidase-like"/>
</dbReference>
<dbReference type="PANTHER" id="PTHR35870:SF7">
    <property type="entry name" value="BAEYER-VILLIGER OXIDASE MDPL"/>
    <property type="match status" value="1"/>
</dbReference>
<dbReference type="PANTHER" id="PTHR35870">
    <property type="entry name" value="PROTEIN, PUTATIVE (AFU_ORTHOLOGUE AFUA_5G03330)-RELATED"/>
    <property type="match status" value="1"/>
</dbReference>
<dbReference type="Pfam" id="PF14027">
    <property type="entry name" value="Questin_oxidase"/>
    <property type="match status" value="1"/>
</dbReference>
<organism>
    <name type="scientific">Pestalotiopsis fici (strain W106-1 / CGMCC3.15140)</name>
    <dbReference type="NCBI Taxonomy" id="1229662"/>
    <lineage>
        <taxon>Eukaryota</taxon>
        <taxon>Fungi</taxon>
        <taxon>Dikarya</taxon>
        <taxon>Ascomycota</taxon>
        <taxon>Pezizomycotina</taxon>
        <taxon>Sordariomycetes</taxon>
        <taxon>Xylariomycetidae</taxon>
        <taxon>Amphisphaeriales</taxon>
        <taxon>Sporocadaceae</taxon>
        <taxon>Pestalotiopsis</taxon>
    </lineage>
</organism>